<evidence type="ECO:0000255" key="1">
    <source>
        <dbReference type="HAMAP-Rule" id="MF_00022"/>
    </source>
</evidence>
<keyword id="KW-0030">Aminoacyl-tRNA synthetase</keyword>
<keyword id="KW-0067">ATP-binding</keyword>
<keyword id="KW-0963">Cytoplasm</keyword>
<keyword id="KW-0436">Ligase</keyword>
<keyword id="KW-0479">Metal-binding</keyword>
<keyword id="KW-0547">Nucleotide-binding</keyword>
<keyword id="KW-0648">Protein biosynthesis</keyword>
<keyword id="KW-0862">Zinc</keyword>
<feature type="chain" id="PRO_1000090081" description="Glutamate--tRNA ligase">
    <location>
        <begin position="1"/>
        <end position="472"/>
    </location>
</feature>
<feature type="short sequence motif" description="'HIGH' region" evidence="1">
    <location>
        <begin position="9"/>
        <end position="19"/>
    </location>
</feature>
<feature type="short sequence motif" description="'KMSKS' region" evidence="1">
    <location>
        <begin position="237"/>
        <end position="241"/>
    </location>
</feature>
<feature type="binding site" evidence="1">
    <location>
        <position position="98"/>
    </location>
    <ligand>
        <name>Zn(2+)</name>
        <dbReference type="ChEBI" id="CHEBI:29105"/>
    </ligand>
</feature>
<feature type="binding site" evidence="1">
    <location>
        <position position="100"/>
    </location>
    <ligand>
        <name>Zn(2+)</name>
        <dbReference type="ChEBI" id="CHEBI:29105"/>
    </ligand>
</feature>
<feature type="binding site" evidence="1">
    <location>
        <position position="125"/>
    </location>
    <ligand>
        <name>Zn(2+)</name>
        <dbReference type="ChEBI" id="CHEBI:29105"/>
    </ligand>
</feature>
<feature type="binding site" evidence="1">
    <location>
        <position position="127"/>
    </location>
    <ligand>
        <name>Zn(2+)</name>
        <dbReference type="ChEBI" id="CHEBI:29105"/>
    </ligand>
</feature>
<feature type="binding site" evidence="1">
    <location>
        <position position="240"/>
    </location>
    <ligand>
        <name>ATP</name>
        <dbReference type="ChEBI" id="CHEBI:30616"/>
    </ligand>
</feature>
<gene>
    <name evidence="1" type="primary">gltX</name>
    <name type="ordered locus">KPK_1389</name>
</gene>
<name>SYE_KLEP3</name>
<sequence length="472" mass="53655">MKIKTRFAPSPTGYLHVGGARTALYSWLFARNHGGEFVLRIEDTDLERSTPEAIEAIMDGMNWLNLQWDEGPYYQTKRFDRYNNVIDEMLEAGTAYKCYCSKERLEALREEQMANGEKPRYDGRCRHSHEHHADDEPCVVRFANPQEGSVIFDDQIRGPIEFSNQELDDLIIRRTDGSPTYNFCVVVDDWDMAITHVIRGEDHINNTPRQINILKALNAPVPVYAHVSMINGDDGKKLSKRHGAVSVMQYRDDGYLPEALLNYLVRLGWSHGDQEIFTREEMIEFFSLGAVSKSASAFNTDKLLWLNHHYINTLPAEYVATHLQWHIEQENIDTRNGPQLAELVKLLGERCKTLKEIAQSCRYFYEEFAEFDADAAKKHLRPVARQPLEVVRDKLAAIVDWTAENVHHAIQATADELEVGMGKVAMPLRVAVTGAGQSRALDVTVHAIGKSRSVERINKALAFIAEREGQAS</sequence>
<organism>
    <name type="scientific">Klebsiella pneumoniae (strain 342)</name>
    <dbReference type="NCBI Taxonomy" id="507522"/>
    <lineage>
        <taxon>Bacteria</taxon>
        <taxon>Pseudomonadati</taxon>
        <taxon>Pseudomonadota</taxon>
        <taxon>Gammaproteobacteria</taxon>
        <taxon>Enterobacterales</taxon>
        <taxon>Enterobacteriaceae</taxon>
        <taxon>Klebsiella/Raoultella group</taxon>
        <taxon>Klebsiella</taxon>
        <taxon>Klebsiella pneumoniae complex</taxon>
    </lineage>
</organism>
<protein>
    <recommendedName>
        <fullName evidence="1">Glutamate--tRNA ligase</fullName>
        <ecNumber evidence="1">6.1.1.17</ecNumber>
    </recommendedName>
    <alternativeName>
        <fullName evidence="1">Glutamyl-tRNA synthetase</fullName>
        <shortName evidence="1">GluRS</shortName>
    </alternativeName>
</protein>
<dbReference type="EC" id="6.1.1.17" evidence="1"/>
<dbReference type="EMBL" id="CP000964">
    <property type="protein sequence ID" value="ACI08095.1"/>
    <property type="molecule type" value="Genomic_DNA"/>
</dbReference>
<dbReference type="SMR" id="B5XVT8"/>
<dbReference type="KEGG" id="kpe:KPK_1389"/>
<dbReference type="HOGENOM" id="CLU_015768_6_0_6"/>
<dbReference type="Proteomes" id="UP000001734">
    <property type="component" value="Chromosome"/>
</dbReference>
<dbReference type="GO" id="GO:0005829">
    <property type="term" value="C:cytosol"/>
    <property type="evidence" value="ECO:0007669"/>
    <property type="project" value="TreeGrafter"/>
</dbReference>
<dbReference type="GO" id="GO:0005524">
    <property type="term" value="F:ATP binding"/>
    <property type="evidence" value="ECO:0007669"/>
    <property type="project" value="UniProtKB-UniRule"/>
</dbReference>
<dbReference type="GO" id="GO:0004818">
    <property type="term" value="F:glutamate-tRNA ligase activity"/>
    <property type="evidence" value="ECO:0007669"/>
    <property type="project" value="UniProtKB-UniRule"/>
</dbReference>
<dbReference type="GO" id="GO:0000049">
    <property type="term" value="F:tRNA binding"/>
    <property type="evidence" value="ECO:0007669"/>
    <property type="project" value="InterPro"/>
</dbReference>
<dbReference type="GO" id="GO:0008270">
    <property type="term" value="F:zinc ion binding"/>
    <property type="evidence" value="ECO:0007669"/>
    <property type="project" value="UniProtKB-UniRule"/>
</dbReference>
<dbReference type="GO" id="GO:0006424">
    <property type="term" value="P:glutamyl-tRNA aminoacylation"/>
    <property type="evidence" value="ECO:0007669"/>
    <property type="project" value="UniProtKB-UniRule"/>
</dbReference>
<dbReference type="CDD" id="cd00808">
    <property type="entry name" value="GluRS_core"/>
    <property type="match status" value="1"/>
</dbReference>
<dbReference type="FunFam" id="1.10.10.350:FF:000001">
    <property type="entry name" value="Glutamate--tRNA ligase"/>
    <property type="match status" value="1"/>
</dbReference>
<dbReference type="FunFam" id="3.40.50.620:FF:000007">
    <property type="entry name" value="Glutamate--tRNA ligase"/>
    <property type="match status" value="1"/>
</dbReference>
<dbReference type="Gene3D" id="1.10.10.350">
    <property type="match status" value="1"/>
</dbReference>
<dbReference type="Gene3D" id="3.40.50.620">
    <property type="entry name" value="HUPs"/>
    <property type="match status" value="1"/>
</dbReference>
<dbReference type="HAMAP" id="MF_00022">
    <property type="entry name" value="Glu_tRNA_synth_type1"/>
    <property type="match status" value="1"/>
</dbReference>
<dbReference type="InterPro" id="IPR045462">
    <property type="entry name" value="aa-tRNA-synth_I_cd-bd"/>
</dbReference>
<dbReference type="InterPro" id="IPR020751">
    <property type="entry name" value="aa-tRNA-synth_I_codon-bd_sub2"/>
</dbReference>
<dbReference type="InterPro" id="IPR001412">
    <property type="entry name" value="aa-tRNA-synth_I_CS"/>
</dbReference>
<dbReference type="InterPro" id="IPR008925">
    <property type="entry name" value="aa_tRNA-synth_I_cd-bd_sf"/>
</dbReference>
<dbReference type="InterPro" id="IPR004527">
    <property type="entry name" value="Glu-tRNA-ligase_bac/mito"/>
</dbReference>
<dbReference type="InterPro" id="IPR000924">
    <property type="entry name" value="Glu/Gln-tRNA-synth"/>
</dbReference>
<dbReference type="InterPro" id="IPR020058">
    <property type="entry name" value="Glu/Gln-tRNA-synth_Ib_cat-dom"/>
</dbReference>
<dbReference type="InterPro" id="IPR049940">
    <property type="entry name" value="GluQ/Sye"/>
</dbReference>
<dbReference type="InterPro" id="IPR033910">
    <property type="entry name" value="GluRS_core"/>
</dbReference>
<dbReference type="InterPro" id="IPR014729">
    <property type="entry name" value="Rossmann-like_a/b/a_fold"/>
</dbReference>
<dbReference type="NCBIfam" id="TIGR00464">
    <property type="entry name" value="gltX_bact"/>
    <property type="match status" value="1"/>
</dbReference>
<dbReference type="PANTHER" id="PTHR43311">
    <property type="entry name" value="GLUTAMATE--TRNA LIGASE"/>
    <property type="match status" value="1"/>
</dbReference>
<dbReference type="PANTHER" id="PTHR43311:SF2">
    <property type="entry name" value="GLUTAMATE--TRNA LIGASE, MITOCHONDRIAL-RELATED"/>
    <property type="match status" value="1"/>
</dbReference>
<dbReference type="Pfam" id="PF19269">
    <property type="entry name" value="Anticodon_2"/>
    <property type="match status" value="1"/>
</dbReference>
<dbReference type="Pfam" id="PF00749">
    <property type="entry name" value="tRNA-synt_1c"/>
    <property type="match status" value="1"/>
</dbReference>
<dbReference type="PRINTS" id="PR00987">
    <property type="entry name" value="TRNASYNTHGLU"/>
</dbReference>
<dbReference type="SUPFAM" id="SSF48163">
    <property type="entry name" value="An anticodon-binding domain of class I aminoacyl-tRNA synthetases"/>
    <property type="match status" value="1"/>
</dbReference>
<dbReference type="SUPFAM" id="SSF52374">
    <property type="entry name" value="Nucleotidylyl transferase"/>
    <property type="match status" value="1"/>
</dbReference>
<dbReference type="PROSITE" id="PS00178">
    <property type="entry name" value="AA_TRNA_LIGASE_I"/>
    <property type="match status" value="1"/>
</dbReference>
<proteinExistence type="inferred from homology"/>
<reference key="1">
    <citation type="journal article" date="2008" name="PLoS Genet.">
        <title>Complete genome sequence of the N2-fixing broad host range endophyte Klebsiella pneumoniae 342 and virulence predictions verified in mice.</title>
        <authorList>
            <person name="Fouts D.E."/>
            <person name="Tyler H.L."/>
            <person name="DeBoy R.T."/>
            <person name="Daugherty S."/>
            <person name="Ren Q."/>
            <person name="Badger J.H."/>
            <person name="Durkin A.S."/>
            <person name="Huot H."/>
            <person name="Shrivastava S."/>
            <person name="Kothari S."/>
            <person name="Dodson R.J."/>
            <person name="Mohamoud Y."/>
            <person name="Khouri H."/>
            <person name="Roesch L.F.W."/>
            <person name="Krogfelt K.A."/>
            <person name="Struve C."/>
            <person name="Triplett E.W."/>
            <person name="Methe B.A."/>
        </authorList>
    </citation>
    <scope>NUCLEOTIDE SEQUENCE [LARGE SCALE GENOMIC DNA]</scope>
    <source>
        <strain>342</strain>
    </source>
</reference>
<comment type="function">
    <text evidence="1">Catalyzes the attachment of glutamate to tRNA(Glu) in a two-step reaction: glutamate is first activated by ATP to form Glu-AMP and then transferred to the acceptor end of tRNA(Glu).</text>
</comment>
<comment type="catalytic activity">
    <reaction evidence="1">
        <text>tRNA(Glu) + L-glutamate + ATP = L-glutamyl-tRNA(Glu) + AMP + diphosphate</text>
        <dbReference type="Rhea" id="RHEA:23540"/>
        <dbReference type="Rhea" id="RHEA-COMP:9663"/>
        <dbReference type="Rhea" id="RHEA-COMP:9680"/>
        <dbReference type="ChEBI" id="CHEBI:29985"/>
        <dbReference type="ChEBI" id="CHEBI:30616"/>
        <dbReference type="ChEBI" id="CHEBI:33019"/>
        <dbReference type="ChEBI" id="CHEBI:78442"/>
        <dbReference type="ChEBI" id="CHEBI:78520"/>
        <dbReference type="ChEBI" id="CHEBI:456215"/>
        <dbReference type="EC" id="6.1.1.17"/>
    </reaction>
</comment>
<comment type="cofactor">
    <cofactor evidence="1">
        <name>Zn(2+)</name>
        <dbReference type="ChEBI" id="CHEBI:29105"/>
    </cofactor>
    <text evidence="1">Binds 1 zinc ion per subunit.</text>
</comment>
<comment type="subunit">
    <text evidence="1">Monomer.</text>
</comment>
<comment type="subcellular location">
    <subcellularLocation>
        <location evidence="1">Cytoplasm</location>
    </subcellularLocation>
</comment>
<comment type="similarity">
    <text evidence="1">Belongs to the class-I aminoacyl-tRNA synthetase family. Glutamate--tRNA ligase type 1 subfamily.</text>
</comment>
<accession>B5XVT8</accession>